<accession>P99062</accession>
<accession>Q99S40</accession>
<protein>
    <recommendedName>
        <fullName evidence="1">Adenylate kinase</fullName>
        <shortName evidence="1">AK</shortName>
        <ecNumber evidence="1">2.7.4.3</ecNumber>
    </recommendedName>
    <alternativeName>
        <fullName evidence="1">ATP-AMP transphosphorylase</fullName>
    </alternativeName>
    <alternativeName>
        <fullName evidence="1">ATP:AMP phosphotransferase</fullName>
    </alternativeName>
    <alternativeName>
        <fullName evidence="1">Adenylate monophosphate kinase</fullName>
    </alternativeName>
</protein>
<feature type="chain" id="PRO_0000158846" description="Adenylate kinase">
    <location>
        <begin position="1"/>
        <end position="215"/>
    </location>
</feature>
<feature type="region of interest" description="NMP" evidence="1">
    <location>
        <begin position="30"/>
        <end position="59"/>
    </location>
</feature>
<feature type="region of interest" description="LID" evidence="1">
    <location>
        <begin position="126"/>
        <end position="163"/>
    </location>
</feature>
<feature type="binding site" evidence="1">
    <location>
        <begin position="10"/>
        <end position="15"/>
    </location>
    <ligand>
        <name>ATP</name>
        <dbReference type="ChEBI" id="CHEBI:30616"/>
    </ligand>
</feature>
<feature type="binding site" evidence="1">
    <location>
        <position position="31"/>
    </location>
    <ligand>
        <name>AMP</name>
        <dbReference type="ChEBI" id="CHEBI:456215"/>
    </ligand>
</feature>
<feature type="binding site" evidence="1">
    <location>
        <position position="36"/>
    </location>
    <ligand>
        <name>AMP</name>
        <dbReference type="ChEBI" id="CHEBI:456215"/>
    </ligand>
</feature>
<feature type="binding site" evidence="1">
    <location>
        <begin position="57"/>
        <end position="59"/>
    </location>
    <ligand>
        <name>AMP</name>
        <dbReference type="ChEBI" id="CHEBI:456215"/>
    </ligand>
</feature>
<feature type="binding site" evidence="1">
    <location>
        <begin position="85"/>
        <end position="88"/>
    </location>
    <ligand>
        <name>AMP</name>
        <dbReference type="ChEBI" id="CHEBI:456215"/>
    </ligand>
</feature>
<feature type="binding site" evidence="1">
    <location>
        <position position="92"/>
    </location>
    <ligand>
        <name>AMP</name>
        <dbReference type="ChEBI" id="CHEBI:456215"/>
    </ligand>
</feature>
<feature type="binding site" evidence="1">
    <location>
        <position position="127"/>
    </location>
    <ligand>
        <name>ATP</name>
        <dbReference type="ChEBI" id="CHEBI:30616"/>
    </ligand>
</feature>
<feature type="binding site" evidence="1">
    <location>
        <position position="130"/>
    </location>
    <ligand>
        <name>Zn(2+)</name>
        <dbReference type="ChEBI" id="CHEBI:29105"/>
        <note>structural</note>
    </ligand>
</feature>
<feature type="binding site" evidence="1">
    <location>
        <position position="133"/>
    </location>
    <ligand>
        <name>Zn(2+)</name>
        <dbReference type="ChEBI" id="CHEBI:29105"/>
        <note>structural</note>
    </ligand>
</feature>
<feature type="binding site" evidence="1">
    <location>
        <begin position="136"/>
        <end position="137"/>
    </location>
    <ligand>
        <name>ATP</name>
        <dbReference type="ChEBI" id="CHEBI:30616"/>
    </ligand>
</feature>
<feature type="binding site" evidence="1">
    <location>
        <position position="150"/>
    </location>
    <ligand>
        <name>Zn(2+)</name>
        <dbReference type="ChEBI" id="CHEBI:29105"/>
        <note>structural</note>
    </ligand>
</feature>
<feature type="binding site" evidence="1">
    <location>
        <position position="153"/>
    </location>
    <ligand>
        <name>Zn(2+)</name>
        <dbReference type="ChEBI" id="CHEBI:29105"/>
        <note>structural</note>
    </ligand>
</feature>
<feature type="binding site" evidence="1">
    <location>
        <position position="160"/>
    </location>
    <ligand>
        <name>AMP</name>
        <dbReference type="ChEBI" id="CHEBI:456215"/>
    </ligand>
</feature>
<feature type="binding site" evidence="1">
    <location>
        <position position="171"/>
    </location>
    <ligand>
        <name>AMP</name>
        <dbReference type="ChEBI" id="CHEBI:456215"/>
    </ligand>
</feature>
<feature type="binding site" evidence="1">
    <location>
        <position position="199"/>
    </location>
    <ligand>
        <name>ATP</name>
        <dbReference type="ChEBI" id="CHEBI:30616"/>
    </ligand>
</feature>
<keyword id="KW-0067">ATP-binding</keyword>
<keyword id="KW-0963">Cytoplasm</keyword>
<keyword id="KW-0418">Kinase</keyword>
<keyword id="KW-0479">Metal-binding</keyword>
<keyword id="KW-0545">Nucleotide biosynthesis</keyword>
<keyword id="KW-0547">Nucleotide-binding</keyword>
<keyword id="KW-0808">Transferase</keyword>
<keyword id="KW-0862">Zinc</keyword>
<organism>
    <name type="scientific">Staphylococcus aureus (strain N315)</name>
    <dbReference type="NCBI Taxonomy" id="158879"/>
    <lineage>
        <taxon>Bacteria</taxon>
        <taxon>Bacillati</taxon>
        <taxon>Bacillota</taxon>
        <taxon>Bacilli</taxon>
        <taxon>Bacillales</taxon>
        <taxon>Staphylococcaceae</taxon>
        <taxon>Staphylococcus</taxon>
    </lineage>
</organism>
<gene>
    <name evidence="1" type="primary">adk</name>
    <name type="ordered locus">SA2027</name>
</gene>
<name>KAD_STAAN</name>
<reference key="1">
    <citation type="journal article" date="2001" name="Lancet">
        <title>Whole genome sequencing of meticillin-resistant Staphylococcus aureus.</title>
        <authorList>
            <person name="Kuroda M."/>
            <person name="Ohta T."/>
            <person name="Uchiyama I."/>
            <person name="Baba T."/>
            <person name="Yuzawa H."/>
            <person name="Kobayashi I."/>
            <person name="Cui L."/>
            <person name="Oguchi A."/>
            <person name="Aoki K."/>
            <person name="Nagai Y."/>
            <person name="Lian J.-Q."/>
            <person name="Ito T."/>
            <person name="Kanamori M."/>
            <person name="Matsumaru H."/>
            <person name="Maruyama A."/>
            <person name="Murakami H."/>
            <person name="Hosoyama A."/>
            <person name="Mizutani-Ui Y."/>
            <person name="Takahashi N.K."/>
            <person name="Sawano T."/>
            <person name="Inoue R."/>
            <person name="Kaito C."/>
            <person name="Sekimizu K."/>
            <person name="Hirakawa H."/>
            <person name="Kuhara S."/>
            <person name="Goto S."/>
            <person name="Yabuzaki J."/>
            <person name="Kanehisa M."/>
            <person name="Yamashita A."/>
            <person name="Oshima K."/>
            <person name="Furuya K."/>
            <person name="Yoshino C."/>
            <person name="Shiba T."/>
            <person name="Hattori M."/>
            <person name="Ogasawara N."/>
            <person name="Hayashi H."/>
            <person name="Hiramatsu K."/>
        </authorList>
    </citation>
    <scope>NUCLEOTIDE SEQUENCE [LARGE SCALE GENOMIC DNA]</scope>
    <source>
        <strain>N315</strain>
    </source>
</reference>
<reference key="2">
    <citation type="journal article" date="2005" name="J. Microbiol. Methods">
        <title>Correlation of proteomic and transcriptomic profiles of Staphylococcus aureus during the post-exponential phase of growth.</title>
        <authorList>
            <person name="Scherl A."/>
            <person name="Francois P."/>
            <person name="Bento M."/>
            <person name="Deshusses J.M."/>
            <person name="Charbonnier Y."/>
            <person name="Converset V."/>
            <person name="Huyghe A."/>
            <person name="Walter N."/>
            <person name="Hoogland C."/>
            <person name="Appel R.D."/>
            <person name="Sanchez J.-C."/>
            <person name="Zimmermann-Ivol C.G."/>
            <person name="Corthals G.L."/>
            <person name="Hochstrasser D.F."/>
            <person name="Schrenzel J."/>
        </authorList>
    </citation>
    <scope>IDENTIFICATION BY MASS SPECTROMETRY</scope>
    <source>
        <strain>N315</strain>
    </source>
</reference>
<reference key="3">
    <citation type="submission" date="2007-10" db="UniProtKB">
        <title>Shotgun proteomic analysis of total and membrane protein extracts of S. aureus strain N315.</title>
        <authorList>
            <person name="Vaezzadeh A.R."/>
            <person name="Deshusses J."/>
            <person name="Lescuyer P."/>
            <person name="Hochstrasser D.F."/>
        </authorList>
    </citation>
    <scope>IDENTIFICATION BY MASS SPECTROMETRY [LARGE SCALE ANALYSIS]</scope>
    <source>
        <strain>N315</strain>
    </source>
</reference>
<dbReference type="EC" id="2.7.4.3" evidence="1"/>
<dbReference type="EMBL" id="BA000018">
    <property type="protein sequence ID" value="BAB43321.1"/>
    <property type="molecule type" value="Genomic_DNA"/>
</dbReference>
<dbReference type="PIR" id="H90019">
    <property type="entry name" value="H90019"/>
</dbReference>
<dbReference type="RefSeq" id="WP_001021468.1">
    <property type="nucleotide sequence ID" value="NC_002745.2"/>
</dbReference>
<dbReference type="SMR" id="P99062"/>
<dbReference type="EnsemblBacteria" id="BAB43321">
    <property type="protein sequence ID" value="BAB43321"/>
    <property type="gene ID" value="BAB43321"/>
</dbReference>
<dbReference type="KEGG" id="sau:SA2027"/>
<dbReference type="HOGENOM" id="CLU_032354_1_2_9"/>
<dbReference type="UniPathway" id="UPA00588">
    <property type="reaction ID" value="UER00649"/>
</dbReference>
<dbReference type="GO" id="GO:0005737">
    <property type="term" value="C:cytoplasm"/>
    <property type="evidence" value="ECO:0007669"/>
    <property type="project" value="UniProtKB-SubCell"/>
</dbReference>
<dbReference type="GO" id="GO:0004017">
    <property type="term" value="F:adenylate kinase activity"/>
    <property type="evidence" value="ECO:0007669"/>
    <property type="project" value="UniProtKB-UniRule"/>
</dbReference>
<dbReference type="GO" id="GO:0005524">
    <property type="term" value="F:ATP binding"/>
    <property type="evidence" value="ECO:0007669"/>
    <property type="project" value="UniProtKB-UniRule"/>
</dbReference>
<dbReference type="GO" id="GO:0008270">
    <property type="term" value="F:zinc ion binding"/>
    <property type="evidence" value="ECO:0007669"/>
    <property type="project" value="UniProtKB-UniRule"/>
</dbReference>
<dbReference type="GO" id="GO:0044209">
    <property type="term" value="P:AMP salvage"/>
    <property type="evidence" value="ECO:0007669"/>
    <property type="project" value="UniProtKB-UniRule"/>
</dbReference>
<dbReference type="CDD" id="cd01428">
    <property type="entry name" value="ADK"/>
    <property type="match status" value="1"/>
</dbReference>
<dbReference type="FunFam" id="3.40.50.300:FF:000106">
    <property type="entry name" value="Adenylate kinase mitochondrial"/>
    <property type="match status" value="1"/>
</dbReference>
<dbReference type="Gene3D" id="3.40.50.300">
    <property type="entry name" value="P-loop containing nucleotide triphosphate hydrolases"/>
    <property type="match status" value="1"/>
</dbReference>
<dbReference type="HAMAP" id="MF_00235">
    <property type="entry name" value="Adenylate_kinase_Adk"/>
    <property type="match status" value="1"/>
</dbReference>
<dbReference type="InterPro" id="IPR006259">
    <property type="entry name" value="Adenyl_kin_sub"/>
</dbReference>
<dbReference type="InterPro" id="IPR000850">
    <property type="entry name" value="Adenylat/UMP-CMP_kin"/>
</dbReference>
<dbReference type="InterPro" id="IPR033690">
    <property type="entry name" value="Adenylat_kinase_CS"/>
</dbReference>
<dbReference type="InterPro" id="IPR007862">
    <property type="entry name" value="Adenylate_kinase_lid-dom"/>
</dbReference>
<dbReference type="InterPro" id="IPR008144">
    <property type="entry name" value="Guanylate_kin-like_dom"/>
</dbReference>
<dbReference type="InterPro" id="IPR027417">
    <property type="entry name" value="P-loop_NTPase"/>
</dbReference>
<dbReference type="NCBIfam" id="TIGR01351">
    <property type="entry name" value="adk"/>
    <property type="match status" value="1"/>
</dbReference>
<dbReference type="NCBIfam" id="NF001380">
    <property type="entry name" value="PRK00279.1-2"/>
    <property type="match status" value="1"/>
</dbReference>
<dbReference type="NCBIfam" id="NF001381">
    <property type="entry name" value="PRK00279.1-3"/>
    <property type="match status" value="1"/>
</dbReference>
<dbReference type="NCBIfam" id="NF011100">
    <property type="entry name" value="PRK14527.1"/>
    <property type="match status" value="1"/>
</dbReference>
<dbReference type="PANTHER" id="PTHR23359">
    <property type="entry name" value="NUCLEOTIDE KINASE"/>
    <property type="match status" value="1"/>
</dbReference>
<dbReference type="Pfam" id="PF00406">
    <property type="entry name" value="ADK"/>
    <property type="match status" value="1"/>
</dbReference>
<dbReference type="Pfam" id="PF05191">
    <property type="entry name" value="ADK_lid"/>
    <property type="match status" value="1"/>
</dbReference>
<dbReference type="PRINTS" id="PR00094">
    <property type="entry name" value="ADENYLTKNASE"/>
</dbReference>
<dbReference type="SUPFAM" id="SSF52540">
    <property type="entry name" value="P-loop containing nucleoside triphosphate hydrolases"/>
    <property type="match status" value="1"/>
</dbReference>
<dbReference type="PROSITE" id="PS00113">
    <property type="entry name" value="ADENYLATE_KINASE"/>
    <property type="match status" value="1"/>
</dbReference>
<sequence>MNIILMGLPGAGKGTQASEIVKKFPIPHISTGDMFRKAIKEETELGKEAKSYMDRGELVPDEVTVGIVKERISEDDAKKGFLLDGFPRTIEQAEALNNIMSELDRNIDAVINIEVPEEELMNRLTGRRICESCGTTYHLVFNPPKVEGICDIDGGKLYQREDDNPETVANRLSVNIKQSKPILDFYDQKGVLKNIDGSKDISDVTKDVIDILDHL</sequence>
<proteinExistence type="evidence at protein level"/>
<comment type="function">
    <text evidence="1">Catalyzes the reversible transfer of the terminal phosphate group between ATP and AMP. Plays an important role in cellular energy homeostasis and in adenine nucleotide metabolism.</text>
</comment>
<comment type="catalytic activity">
    <reaction evidence="1">
        <text>AMP + ATP = 2 ADP</text>
        <dbReference type="Rhea" id="RHEA:12973"/>
        <dbReference type="ChEBI" id="CHEBI:30616"/>
        <dbReference type="ChEBI" id="CHEBI:456215"/>
        <dbReference type="ChEBI" id="CHEBI:456216"/>
        <dbReference type="EC" id="2.7.4.3"/>
    </reaction>
</comment>
<comment type="pathway">
    <text evidence="1">Purine metabolism; AMP biosynthesis via salvage pathway; AMP from ADP: step 1/1.</text>
</comment>
<comment type="subunit">
    <text evidence="1">Monomer.</text>
</comment>
<comment type="subcellular location">
    <subcellularLocation>
        <location evidence="1">Cytoplasm</location>
    </subcellularLocation>
</comment>
<comment type="domain">
    <text evidence="1">Consists of three domains, a large central CORE domain and two small peripheral domains, NMPbind and LID, which undergo movements during catalysis. The LID domain closes over the site of phosphoryl transfer upon ATP binding. Assembling and dissambling the active center during each catalytic cycle provides an effective means to prevent ATP hydrolysis. Some bacteria have evolved a zinc-coordinating structure that stabilizes the LID domain.</text>
</comment>
<comment type="similarity">
    <text evidence="1">Belongs to the adenylate kinase family.</text>
</comment>
<evidence type="ECO:0000255" key="1">
    <source>
        <dbReference type="HAMAP-Rule" id="MF_00235"/>
    </source>
</evidence>